<evidence type="ECO:0000255" key="1">
    <source>
        <dbReference type="HAMAP-Rule" id="MF_00374"/>
    </source>
</evidence>
<evidence type="ECO:0000305" key="2"/>
<reference key="1">
    <citation type="submission" date="2006-06" db="EMBL/GenBank/DDBJ databases">
        <title>Complete sequence of Rubrobacter xylanophilus DSM 9941.</title>
        <authorList>
            <consortium name="US DOE Joint Genome Institute"/>
            <person name="Copeland A."/>
            <person name="Lucas S."/>
            <person name="Lapidus A."/>
            <person name="Barry K."/>
            <person name="Detter J.C."/>
            <person name="Glavina del Rio T."/>
            <person name="Hammon N."/>
            <person name="Israni S."/>
            <person name="Dalin E."/>
            <person name="Tice H."/>
            <person name="Pitluck S."/>
            <person name="Munk A.C."/>
            <person name="Brettin T."/>
            <person name="Bruce D."/>
            <person name="Han C."/>
            <person name="Tapia R."/>
            <person name="Gilna P."/>
            <person name="Schmutz J."/>
            <person name="Larimer F."/>
            <person name="Land M."/>
            <person name="Hauser L."/>
            <person name="Kyrpides N."/>
            <person name="Lykidis A."/>
            <person name="da Costa M.S."/>
            <person name="Rainey F.A."/>
            <person name="Empadinhas N."/>
            <person name="Jolivet E."/>
            <person name="Battista J.R."/>
            <person name="Richardson P."/>
        </authorList>
    </citation>
    <scope>NUCLEOTIDE SEQUENCE [LARGE SCALE GENOMIC DNA]</scope>
    <source>
        <strain>DSM 9941 / JCM 11954 / NBRC 16129 / PRD-1</strain>
    </source>
</reference>
<feature type="chain" id="PRO_1000194029" description="Large ribosomal subunit protein uL29">
    <location>
        <begin position="1"/>
        <end position="67"/>
    </location>
</feature>
<name>RL29_RUBXD</name>
<proteinExistence type="inferred from homology"/>
<protein>
    <recommendedName>
        <fullName evidence="1">Large ribosomal subunit protein uL29</fullName>
    </recommendedName>
    <alternativeName>
        <fullName evidence="2">50S ribosomal protein L29</fullName>
    </alternativeName>
</protein>
<sequence>MARLKAPELRELDVEELERRLAETRRELFNLRFQHATGQLENTGQLREVRRNIARLLTVLNQKRQEK</sequence>
<keyword id="KW-1185">Reference proteome</keyword>
<keyword id="KW-0687">Ribonucleoprotein</keyword>
<keyword id="KW-0689">Ribosomal protein</keyword>
<organism>
    <name type="scientific">Rubrobacter xylanophilus (strain DSM 9941 / JCM 11954 / NBRC 16129 / PRD-1)</name>
    <dbReference type="NCBI Taxonomy" id="266117"/>
    <lineage>
        <taxon>Bacteria</taxon>
        <taxon>Bacillati</taxon>
        <taxon>Actinomycetota</taxon>
        <taxon>Rubrobacteria</taxon>
        <taxon>Rubrobacterales</taxon>
        <taxon>Rubrobacteraceae</taxon>
        <taxon>Rubrobacter</taxon>
    </lineage>
</organism>
<accession>Q1AU37</accession>
<comment type="similarity">
    <text evidence="1">Belongs to the universal ribosomal protein uL29 family.</text>
</comment>
<dbReference type="EMBL" id="CP000386">
    <property type="protein sequence ID" value="ABG05091.1"/>
    <property type="molecule type" value="Genomic_DNA"/>
</dbReference>
<dbReference type="RefSeq" id="WP_011565106.1">
    <property type="nucleotide sequence ID" value="NC_008148.1"/>
</dbReference>
<dbReference type="SMR" id="Q1AU37"/>
<dbReference type="STRING" id="266117.Rxyl_2147"/>
<dbReference type="KEGG" id="rxy:Rxyl_2147"/>
<dbReference type="eggNOG" id="COG0255">
    <property type="taxonomic scope" value="Bacteria"/>
</dbReference>
<dbReference type="HOGENOM" id="CLU_158491_5_2_11"/>
<dbReference type="OrthoDB" id="9815192at2"/>
<dbReference type="PhylomeDB" id="Q1AU37"/>
<dbReference type="Proteomes" id="UP000006637">
    <property type="component" value="Chromosome"/>
</dbReference>
<dbReference type="GO" id="GO:0022625">
    <property type="term" value="C:cytosolic large ribosomal subunit"/>
    <property type="evidence" value="ECO:0007669"/>
    <property type="project" value="TreeGrafter"/>
</dbReference>
<dbReference type="GO" id="GO:0003735">
    <property type="term" value="F:structural constituent of ribosome"/>
    <property type="evidence" value="ECO:0007669"/>
    <property type="project" value="InterPro"/>
</dbReference>
<dbReference type="GO" id="GO:0006412">
    <property type="term" value="P:translation"/>
    <property type="evidence" value="ECO:0007669"/>
    <property type="project" value="UniProtKB-UniRule"/>
</dbReference>
<dbReference type="CDD" id="cd00427">
    <property type="entry name" value="Ribosomal_L29_HIP"/>
    <property type="match status" value="1"/>
</dbReference>
<dbReference type="FunFam" id="1.10.287.310:FF:000001">
    <property type="entry name" value="50S ribosomal protein L29"/>
    <property type="match status" value="1"/>
</dbReference>
<dbReference type="Gene3D" id="1.10.287.310">
    <property type="match status" value="1"/>
</dbReference>
<dbReference type="HAMAP" id="MF_00374">
    <property type="entry name" value="Ribosomal_uL29"/>
    <property type="match status" value="1"/>
</dbReference>
<dbReference type="InterPro" id="IPR050063">
    <property type="entry name" value="Ribosomal_protein_uL29"/>
</dbReference>
<dbReference type="InterPro" id="IPR001854">
    <property type="entry name" value="Ribosomal_uL29"/>
</dbReference>
<dbReference type="InterPro" id="IPR018254">
    <property type="entry name" value="Ribosomal_uL29_CS"/>
</dbReference>
<dbReference type="InterPro" id="IPR036049">
    <property type="entry name" value="Ribosomal_uL29_sf"/>
</dbReference>
<dbReference type="NCBIfam" id="TIGR00012">
    <property type="entry name" value="L29"/>
    <property type="match status" value="1"/>
</dbReference>
<dbReference type="PANTHER" id="PTHR10916">
    <property type="entry name" value="60S RIBOSOMAL PROTEIN L35/50S RIBOSOMAL PROTEIN L29"/>
    <property type="match status" value="1"/>
</dbReference>
<dbReference type="PANTHER" id="PTHR10916:SF0">
    <property type="entry name" value="LARGE RIBOSOMAL SUBUNIT PROTEIN UL29C"/>
    <property type="match status" value="1"/>
</dbReference>
<dbReference type="Pfam" id="PF00831">
    <property type="entry name" value="Ribosomal_L29"/>
    <property type="match status" value="1"/>
</dbReference>
<dbReference type="SUPFAM" id="SSF46561">
    <property type="entry name" value="Ribosomal protein L29 (L29p)"/>
    <property type="match status" value="1"/>
</dbReference>
<dbReference type="PROSITE" id="PS00579">
    <property type="entry name" value="RIBOSOMAL_L29"/>
    <property type="match status" value="1"/>
</dbReference>
<gene>
    <name evidence="1" type="primary">rpmC</name>
    <name type="ordered locus">Rxyl_2147</name>
</gene>